<dbReference type="EC" id="3.4.21.4"/>
<dbReference type="EMBL" id="X70075">
    <property type="protein sequence ID" value="CAA49680.1"/>
    <property type="molecule type" value="mRNA"/>
</dbReference>
<dbReference type="EMBL" id="X70071">
    <property type="protein sequence ID" value="CAA49676.1"/>
    <property type="molecule type" value="mRNA"/>
</dbReference>
<dbReference type="EMBL" id="X70072">
    <property type="protein sequence ID" value="CAA49677.1"/>
    <property type="molecule type" value="mRNA"/>
</dbReference>
<dbReference type="PIR" id="S66659">
    <property type="entry name" value="S31776"/>
</dbReference>
<dbReference type="PIR" id="S66660">
    <property type="entry name" value="S31775"/>
</dbReference>
<dbReference type="RefSeq" id="NP_001117183.1">
    <property type="nucleotide sequence ID" value="NM_001123711.1"/>
</dbReference>
<dbReference type="RefSeq" id="NP_001119704.1">
    <property type="nucleotide sequence ID" value="NM_001126232.1"/>
</dbReference>
<dbReference type="PDB" id="1BIT">
    <property type="method" value="X-ray"/>
    <property type="resolution" value="1.83 A"/>
    <property type="chains" value="A=6-242"/>
</dbReference>
<dbReference type="PDB" id="1BZX">
    <property type="method" value="X-ray"/>
    <property type="resolution" value="2.10 A"/>
    <property type="chains" value="E=21-242"/>
</dbReference>
<dbReference type="PDB" id="1HJ8">
    <property type="method" value="X-ray"/>
    <property type="resolution" value="1.00 A"/>
    <property type="chains" value="A=21-242"/>
</dbReference>
<dbReference type="PDB" id="1UTJ">
    <property type="method" value="X-ray"/>
    <property type="resolution" value="1.83 A"/>
    <property type="chains" value="A=1-242"/>
</dbReference>
<dbReference type="PDB" id="1UTK">
    <property type="method" value="X-ray"/>
    <property type="resolution" value="1.53 A"/>
    <property type="chains" value="A=1-242"/>
</dbReference>
<dbReference type="PDB" id="1UTL">
    <property type="method" value="X-ray"/>
    <property type="resolution" value="1.70 A"/>
    <property type="chains" value="M=1-242"/>
</dbReference>
<dbReference type="PDB" id="1UTM">
    <property type="method" value="X-ray"/>
    <property type="resolution" value="1.50 A"/>
    <property type="chains" value="A=1-242"/>
</dbReference>
<dbReference type="PDB" id="2STA">
    <property type="method" value="X-ray"/>
    <property type="resolution" value="1.80 A"/>
    <property type="chains" value="E=21-242"/>
</dbReference>
<dbReference type="PDB" id="2STB">
    <property type="method" value="X-ray"/>
    <property type="resolution" value="1.80 A"/>
    <property type="chains" value="E=21-242"/>
</dbReference>
<dbReference type="PDB" id="2TBS">
    <property type="method" value="X-ray"/>
    <property type="resolution" value="1.80 A"/>
    <property type="chains" value="A=21-242"/>
</dbReference>
<dbReference type="PDBsum" id="1BIT"/>
<dbReference type="PDBsum" id="1BZX"/>
<dbReference type="PDBsum" id="1HJ8"/>
<dbReference type="PDBsum" id="1UTJ"/>
<dbReference type="PDBsum" id="1UTK"/>
<dbReference type="PDBsum" id="1UTL"/>
<dbReference type="PDBsum" id="1UTM"/>
<dbReference type="PDBsum" id="2STA"/>
<dbReference type="PDBsum" id="2STB"/>
<dbReference type="PDBsum" id="2TBS"/>
<dbReference type="SMR" id="P35031"/>
<dbReference type="MINT" id="P35031"/>
<dbReference type="STRING" id="8030.ENSSSAP00000006839"/>
<dbReference type="MEROPS" id="S01.125"/>
<dbReference type="PaxDb" id="8030-ENSSSAP00000006839"/>
<dbReference type="GeneID" id="100137021"/>
<dbReference type="GeneID" id="100137022"/>
<dbReference type="KEGG" id="sasa:100137021"/>
<dbReference type="KEGG" id="sasa:100137022"/>
<dbReference type="CTD" id="100137021"/>
<dbReference type="CTD" id="100137022"/>
<dbReference type="OrthoDB" id="461333at7898"/>
<dbReference type="SABIO-RK" id="P35031"/>
<dbReference type="EvolutionaryTrace" id="P35031"/>
<dbReference type="PRO" id="PR:P35031"/>
<dbReference type="Proteomes" id="UP000087266">
    <property type="component" value="Unplaced"/>
</dbReference>
<dbReference type="GO" id="GO:0005615">
    <property type="term" value="C:extracellular space"/>
    <property type="evidence" value="ECO:0007669"/>
    <property type="project" value="TreeGrafter"/>
</dbReference>
<dbReference type="GO" id="GO:0046872">
    <property type="term" value="F:metal ion binding"/>
    <property type="evidence" value="ECO:0007669"/>
    <property type="project" value="UniProtKB-KW"/>
</dbReference>
<dbReference type="GO" id="GO:0004252">
    <property type="term" value="F:serine-type endopeptidase activity"/>
    <property type="evidence" value="ECO:0007669"/>
    <property type="project" value="UniProtKB-EC"/>
</dbReference>
<dbReference type="GO" id="GO:0007586">
    <property type="term" value="P:digestion"/>
    <property type="evidence" value="ECO:0007669"/>
    <property type="project" value="UniProtKB-KW"/>
</dbReference>
<dbReference type="GO" id="GO:0006508">
    <property type="term" value="P:proteolysis"/>
    <property type="evidence" value="ECO:0007669"/>
    <property type="project" value="UniProtKB-KW"/>
</dbReference>
<dbReference type="CDD" id="cd00190">
    <property type="entry name" value="Tryp_SPc"/>
    <property type="match status" value="1"/>
</dbReference>
<dbReference type="FunFam" id="2.40.10.10:FF:000258">
    <property type="entry name" value="Anionic trypsin isoform 1"/>
    <property type="match status" value="1"/>
</dbReference>
<dbReference type="FunFam" id="2.40.10.10:FF:000008">
    <property type="entry name" value="Cationic trypsin"/>
    <property type="match status" value="1"/>
</dbReference>
<dbReference type="Gene3D" id="2.40.10.10">
    <property type="entry name" value="Trypsin-like serine proteases"/>
    <property type="match status" value="2"/>
</dbReference>
<dbReference type="InterPro" id="IPR009003">
    <property type="entry name" value="Peptidase_S1_PA"/>
</dbReference>
<dbReference type="InterPro" id="IPR043504">
    <property type="entry name" value="Peptidase_S1_PA_chymotrypsin"/>
</dbReference>
<dbReference type="InterPro" id="IPR001314">
    <property type="entry name" value="Peptidase_S1A"/>
</dbReference>
<dbReference type="InterPro" id="IPR050127">
    <property type="entry name" value="Serine_Proteases_S1"/>
</dbReference>
<dbReference type="InterPro" id="IPR001254">
    <property type="entry name" value="Trypsin_dom"/>
</dbReference>
<dbReference type="InterPro" id="IPR018114">
    <property type="entry name" value="TRYPSIN_HIS"/>
</dbReference>
<dbReference type="InterPro" id="IPR033116">
    <property type="entry name" value="TRYPSIN_SER"/>
</dbReference>
<dbReference type="PANTHER" id="PTHR24264">
    <property type="entry name" value="TRYPSIN-RELATED"/>
    <property type="match status" value="1"/>
</dbReference>
<dbReference type="PANTHER" id="PTHR24264:SF6">
    <property type="entry name" value="TRYPSINOGEN 1A-RELATED"/>
    <property type="match status" value="1"/>
</dbReference>
<dbReference type="Pfam" id="PF00089">
    <property type="entry name" value="Trypsin"/>
    <property type="match status" value="1"/>
</dbReference>
<dbReference type="PRINTS" id="PR00722">
    <property type="entry name" value="CHYMOTRYPSIN"/>
</dbReference>
<dbReference type="SMART" id="SM00020">
    <property type="entry name" value="Tryp_SPc"/>
    <property type="match status" value="1"/>
</dbReference>
<dbReference type="SUPFAM" id="SSF50494">
    <property type="entry name" value="Trypsin-like serine proteases"/>
    <property type="match status" value="1"/>
</dbReference>
<dbReference type="PROSITE" id="PS50240">
    <property type="entry name" value="TRYPSIN_DOM"/>
    <property type="match status" value="1"/>
</dbReference>
<dbReference type="PROSITE" id="PS00134">
    <property type="entry name" value="TRYPSIN_HIS"/>
    <property type="match status" value="1"/>
</dbReference>
<dbReference type="PROSITE" id="PS00135">
    <property type="entry name" value="TRYPSIN_SER"/>
    <property type="match status" value="1"/>
</dbReference>
<name>TRY1_SALSA</name>
<feature type="signal peptide" evidence="2">
    <location>
        <begin position="1"/>
        <end position="15"/>
    </location>
</feature>
<feature type="propeptide" id="PRO_0000028225" description="Activation peptide">
    <location>
        <begin position="16"/>
        <end position="20"/>
    </location>
</feature>
<feature type="chain" id="PRO_0000028226" description="Trypsin-1">
    <location>
        <begin position="21"/>
        <end position="242"/>
    </location>
</feature>
<feature type="domain" description="Peptidase S1" evidence="3">
    <location>
        <begin position="21"/>
        <end position="240"/>
    </location>
</feature>
<feature type="active site" description="Charge relay system">
    <location>
        <position position="60"/>
    </location>
</feature>
<feature type="active site" description="Charge relay system">
    <location>
        <position position="104"/>
    </location>
</feature>
<feature type="active site" description="Charge relay system">
    <location>
        <position position="196"/>
    </location>
</feature>
<feature type="binding site">
    <location>
        <position position="72"/>
    </location>
    <ligand>
        <name>Ca(2+)</name>
        <dbReference type="ChEBI" id="CHEBI:29108"/>
    </ligand>
</feature>
<feature type="binding site">
    <location>
        <position position="74"/>
    </location>
    <ligand>
        <name>Ca(2+)</name>
        <dbReference type="ChEBI" id="CHEBI:29108"/>
    </ligand>
</feature>
<feature type="binding site">
    <location>
        <position position="77"/>
    </location>
    <ligand>
        <name>Ca(2+)</name>
        <dbReference type="ChEBI" id="CHEBI:29108"/>
    </ligand>
</feature>
<feature type="binding site">
    <location>
        <position position="82"/>
    </location>
    <ligand>
        <name>Ca(2+)</name>
        <dbReference type="ChEBI" id="CHEBI:29108"/>
    </ligand>
</feature>
<feature type="site" description="Required for specificity" evidence="1">
    <location>
        <position position="190"/>
    </location>
</feature>
<feature type="disulfide bond">
    <location>
        <begin position="27"/>
        <end position="156"/>
    </location>
</feature>
<feature type="disulfide bond">
    <location>
        <begin position="45"/>
        <end position="61"/>
    </location>
</feature>
<feature type="disulfide bond">
    <location>
        <begin position="129"/>
        <end position="229"/>
    </location>
</feature>
<feature type="disulfide bond">
    <location>
        <begin position="136"/>
        <end position="202"/>
    </location>
</feature>
<feature type="disulfide bond">
    <location>
        <begin position="167"/>
        <end position="181"/>
    </location>
</feature>
<feature type="disulfide bond">
    <location>
        <begin position="192"/>
        <end position="216"/>
    </location>
</feature>
<feature type="sequence variant" description="In trypsins IA/IB.">
    <original>T</original>
    <variation>A</variation>
    <location>
        <position position="33"/>
    </location>
</feature>
<feature type="turn" evidence="7">
    <location>
        <begin position="29"/>
        <end position="34"/>
    </location>
</feature>
<feature type="strand" evidence="4">
    <location>
        <begin position="35"/>
        <end position="51"/>
    </location>
</feature>
<feature type="strand" evidence="4">
    <location>
        <begin position="54"/>
        <end position="57"/>
    </location>
</feature>
<feature type="helix" evidence="4">
    <location>
        <begin position="59"/>
        <end position="61"/>
    </location>
</feature>
<feature type="strand" evidence="4">
    <location>
        <begin position="67"/>
        <end position="71"/>
    </location>
</feature>
<feature type="strand" evidence="4">
    <location>
        <begin position="83"/>
        <end position="92"/>
    </location>
</feature>
<feature type="turn" evidence="4">
    <location>
        <begin position="98"/>
        <end position="101"/>
    </location>
</feature>
<feature type="strand" evidence="4">
    <location>
        <begin position="106"/>
        <end position="112"/>
    </location>
</feature>
<feature type="strand" evidence="4">
    <location>
        <begin position="117"/>
        <end position="119"/>
    </location>
</feature>
<feature type="strand" evidence="4">
    <location>
        <begin position="135"/>
        <end position="142"/>
    </location>
</feature>
<feature type="strand" evidence="6">
    <location>
        <begin position="146"/>
        <end position="148"/>
    </location>
</feature>
<feature type="strand" evidence="4">
    <location>
        <begin position="155"/>
        <end position="161"/>
    </location>
</feature>
<feature type="helix" evidence="4">
    <location>
        <begin position="164"/>
        <end position="170"/>
    </location>
</feature>
<feature type="turn" evidence="5">
    <location>
        <begin position="172"/>
        <end position="174"/>
    </location>
</feature>
<feature type="strand" evidence="4">
    <location>
        <begin position="179"/>
        <end position="183"/>
    </location>
</feature>
<feature type="turn" evidence="7">
    <location>
        <begin position="193"/>
        <end position="197"/>
    </location>
</feature>
<feature type="strand" evidence="4">
    <location>
        <begin position="199"/>
        <end position="202"/>
    </location>
</feature>
<feature type="strand" evidence="4">
    <location>
        <begin position="205"/>
        <end position="212"/>
    </location>
</feature>
<feature type="strand" evidence="4">
    <location>
        <begin position="214"/>
        <end position="217"/>
    </location>
</feature>
<feature type="strand" evidence="4">
    <location>
        <begin position="223"/>
        <end position="227"/>
    </location>
</feature>
<feature type="helix" evidence="4">
    <location>
        <begin position="228"/>
        <end position="231"/>
    </location>
</feature>
<feature type="helix" evidence="4">
    <location>
        <begin position="232"/>
        <end position="240"/>
    </location>
</feature>
<accession>P35031</accession>
<reference key="1">
    <citation type="journal article" date="1995" name="Eur. J. Biochem.">
        <title>Molecular cloning and characterization of anionic and cationic variants of trypsin from Atlantic salmon.</title>
        <authorList>
            <person name="Male R."/>
            <person name="Lorens J.B."/>
            <person name="Smals A.O."/>
            <person name="Torrissen K.R."/>
        </authorList>
    </citation>
    <scope>NUCLEOTIDE SEQUENCE [MRNA]</scope>
    <source>
        <tissue>Pancreas</tissue>
    </source>
</reference>
<reference key="2">
    <citation type="journal article" date="1993" name="Acta Crystallogr. D">
        <title>Structure determination and refinement of benzamidine-inhibited trypsin from the North Atlantic salmon (Salmo salar) at 1.82-A resolution.</title>
        <authorList>
            <person name="Smalas A.O."/>
            <person name="Hordvik A."/>
        </authorList>
    </citation>
    <scope>X-RAY CRYSTALLOGRAPHY (1.82 ANGSTROMS)</scope>
</reference>
<reference key="3">
    <citation type="journal article" date="1994" name="Proteins">
        <title>Cold adaption of enzymes: structural comparison between salmon and bovine trypsins.</title>
        <authorList>
            <person name="Smalas A.O."/>
            <person name="Heimstad E.S."/>
            <person name="Hordvik A."/>
            <person name="Willassen N.P."/>
            <person name="Male R."/>
        </authorList>
    </citation>
    <scope>X-RAY CRYSTALLOGRAPHY (1.82 ANGSTROMS)</scope>
</reference>
<organism>
    <name type="scientific">Salmo salar</name>
    <name type="common">Atlantic salmon</name>
    <dbReference type="NCBI Taxonomy" id="8030"/>
    <lineage>
        <taxon>Eukaryota</taxon>
        <taxon>Metazoa</taxon>
        <taxon>Chordata</taxon>
        <taxon>Craniata</taxon>
        <taxon>Vertebrata</taxon>
        <taxon>Euteleostomi</taxon>
        <taxon>Actinopterygii</taxon>
        <taxon>Neopterygii</taxon>
        <taxon>Teleostei</taxon>
        <taxon>Protacanthopterygii</taxon>
        <taxon>Salmoniformes</taxon>
        <taxon>Salmonidae</taxon>
        <taxon>Salmoninae</taxon>
        <taxon>Salmo</taxon>
    </lineage>
</organism>
<sequence length="242" mass="25958">MISLVFVLLIGAAFATEDDKIVGGYECKAYSQTHQVSLNSGYHFCGGSLVNENWVVSAAHCYKSRVEVRLGEHNIKVTEGSEQFISSSRVIRHPNYSSYNIDNDIMLIKLSKPATLNTYVQPVALPTSCAPAGTMCTVSGWGNTMSSTADSNKLQCLNIPILSYSDCNNSYPGMITNAMFCAGYLEGGKDSCQGDSGGPVVCNGELQGVVSWGYGCAEPGNPGVYAKVCIFNDWLTSTMASY</sequence>
<protein>
    <recommendedName>
        <fullName>Trypsin-1</fullName>
        <ecNumber>3.4.21.4</ecNumber>
    </recommendedName>
    <alternativeName>
        <fullName>Trypsin I</fullName>
    </alternativeName>
</protein>
<proteinExistence type="evidence at protein level"/>
<comment type="catalytic activity">
    <reaction>
        <text>Preferential cleavage: Arg-|-Xaa, Lys-|-Xaa.</text>
        <dbReference type="EC" id="3.4.21.4"/>
    </reaction>
</comment>
<comment type="cofactor">
    <cofactor>
        <name>Ca(2+)</name>
        <dbReference type="ChEBI" id="CHEBI:29108"/>
    </cofactor>
    <text>Binds 1 Ca(2+) ion per subunit.</text>
</comment>
<comment type="subcellular location">
    <subcellularLocation>
        <location>Secreted</location>
        <location>Extracellular space</location>
    </subcellularLocation>
</comment>
<comment type="similarity">
    <text evidence="3">Belongs to the peptidase S1 family.</text>
</comment>
<evidence type="ECO:0000250" key="1"/>
<evidence type="ECO:0000255" key="2"/>
<evidence type="ECO:0000255" key="3">
    <source>
        <dbReference type="PROSITE-ProRule" id="PRU00274"/>
    </source>
</evidence>
<evidence type="ECO:0007829" key="4">
    <source>
        <dbReference type="PDB" id="1HJ8"/>
    </source>
</evidence>
<evidence type="ECO:0007829" key="5">
    <source>
        <dbReference type="PDB" id="1UTK"/>
    </source>
</evidence>
<evidence type="ECO:0007829" key="6">
    <source>
        <dbReference type="PDB" id="1UTL"/>
    </source>
</evidence>
<evidence type="ECO:0007829" key="7">
    <source>
        <dbReference type="PDB" id="2TBS"/>
    </source>
</evidence>
<keyword id="KW-0002">3D-structure</keyword>
<keyword id="KW-0106">Calcium</keyword>
<keyword id="KW-0222">Digestion</keyword>
<keyword id="KW-1015">Disulfide bond</keyword>
<keyword id="KW-0378">Hydrolase</keyword>
<keyword id="KW-0479">Metal-binding</keyword>
<keyword id="KW-0645">Protease</keyword>
<keyword id="KW-1185">Reference proteome</keyword>
<keyword id="KW-0964">Secreted</keyword>
<keyword id="KW-0720">Serine protease</keyword>
<keyword id="KW-0732">Signal</keyword>
<keyword id="KW-0865">Zymogen</keyword>